<accession>Q5HGD1</accession>
<keyword id="KW-0963">Cytoplasm</keyword>
<keyword id="KW-0274">FAD</keyword>
<keyword id="KW-0285">Flavoprotein</keyword>
<keyword id="KW-0319">Glycerol metabolism</keyword>
<keyword id="KW-0560">Oxidoreductase</keyword>
<evidence type="ECO:0000250" key="1"/>
<evidence type="ECO:0000255" key="2"/>
<evidence type="ECO:0000305" key="3"/>
<protein>
    <recommendedName>
        <fullName>Aerobic glycerol-3-phosphate dehydrogenase</fullName>
        <ecNumber>1.1.5.3</ecNumber>
    </recommendedName>
</protein>
<gene>
    <name type="primary">glpD</name>
    <name type="ordered locus">SACOL1321</name>
</gene>
<name>GLPD_STAAC</name>
<organism>
    <name type="scientific">Staphylococcus aureus (strain COL)</name>
    <dbReference type="NCBI Taxonomy" id="93062"/>
    <lineage>
        <taxon>Bacteria</taxon>
        <taxon>Bacillati</taxon>
        <taxon>Bacillota</taxon>
        <taxon>Bacilli</taxon>
        <taxon>Bacillales</taxon>
        <taxon>Staphylococcaceae</taxon>
        <taxon>Staphylococcus</taxon>
    </lineage>
</organism>
<reference key="1">
    <citation type="journal article" date="2005" name="J. Bacteriol.">
        <title>Insights on evolution of virulence and resistance from the complete genome analysis of an early methicillin-resistant Staphylococcus aureus strain and a biofilm-producing methicillin-resistant Staphylococcus epidermidis strain.</title>
        <authorList>
            <person name="Gill S.R."/>
            <person name="Fouts D.E."/>
            <person name="Archer G.L."/>
            <person name="Mongodin E.F."/>
            <person name="DeBoy R.T."/>
            <person name="Ravel J."/>
            <person name="Paulsen I.T."/>
            <person name="Kolonay J.F."/>
            <person name="Brinkac L.M."/>
            <person name="Beanan M.J."/>
            <person name="Dodson R.J."/>
            <person name="Daugherty S.C."/>
            <person name="Madupu R."/>
            <person name="Angiuoli S.V."/>
            <person name="Durkin A.S."/>
            <person name="Haft D.H."/>
            <person name="Vamathevan J.J."/>
            <person name="Khouri H."/>
            <person name="Utterback T.R."/>
            <person name="Lee C."/>
            <person name="Dimitrov G."/>
            <person name="Jiang L."/>
            <person name="Qin H."/>
            <person name="Weidman J."/>
            <person name="Tran K."/>
            <person name="Kang K.H."/>
            <person name="Hance I.R."/>
            <person name="Nelson K.E."/>
            <person name="Fraser C.M."/>
        </authorList>
    </citation>
    <scope>NUCLEOTIDE SEQUENCE [LARGE SCALE GENOMIC DNA]</scope>
    <source>
        <strain>COL</strain>
    </source>
</reference>
<dbReference type="EC" id="1.1.5.3"/>
<dbReference type="EMBL" id="CP000046">
    <property type="protein sequence ID" value="AAW38150.1"/>
    <property type="molecule type" value="Genomic_DNA"/>
</dbReference>
<dbReference type="RefSeq" id="WP_001218596.1">
    <property type="nucleotide sequence ID" value="NZ_JBGOFO010000002.1"/>
</dbReference>
<dbReference type="SMR" id="Q5HGD1"/>
<dbReference type="KEGG" id="sac:SACOL1321"/>
<dbReference type="HOGENOM" id="CLU_015740_5_2_9"/>
<dbReference type="UniPathway" id="UPA00618">
    <property type="reaction ID" value="UER00674"/>
</dbReference>
<dbReference type="Proteomes" id="UP000000530">
    <property type="component" value="Chromosome"/>
</dbReference>
<dbReference type="GO" id="GO:0005737">
    <property type="term" value="C:cytoplasm"/>
    <property type="evidence" value="ECO:0007669"/>
    <property type="project" value="UniProtKB-SubCell"/>
</dbReference>
<dbReference type="GO" id="GO:0004368">
    <property type="term" value="F:glycerol-3-phosphate dehydrogenase (quinone) activity"/>
    <property type="evidence" value="ECO:0007669"/>
    <property type="project" value="UniProtKB-EC"/>
</dbReference>
<dbReference type="GO" id="GO:0019563">
    <property type="term" value="P:glycerol catabolic process"/>
    <property type="evidence" value="ECO:0007669"/>
    <property type="project" value="UniProtKB-UniPathway"/>
</dbReference>
<dbReference type="GO" id="GO:0046168">
    <property type="term" value="P:glycerol-3-phosphate catabolic process"/>
    <property type="evidence" value="ECO:0007669"/>
    <property type="project" value="TreeGrafter"/>
</dbReference>
<dbReference type="Gene3D" id="1.10.8.870">
    <property type="entry name" value="Alpha-glycerophosphate oxidase, cap domain"/>
    <property type="match status" value="1"/>
</dbReference>
<dbReference type="Gene3D" id="3.30.9.10">
    <property type="entry name" value="D-Amino Acid Oxidase, subunit A, domain 2"/>
    <property type="match status" value="1"/>
</dbReference>
<dbReference type="Gene3D" id="3.50.50.60">
    <property type="entry name" value="FAD/NAD(P)-binding domain"/>
    <property type="match status" value="1"/>
</dbReference>
<dbReference type="InterPro" id="IPR031656">
    <property type="entry name" value="DAO_C"/>
</dbReference>
<dbReference type="InterPro" id="IPR038299">
    <property type="entry name" value="DAO_C_sf"/>
</dbReference>
<dbReference type="InterPro" id="IPR006076">
    <property type="entry name" value="FAD-dep_OxRdtase"/>
</dbReference>
<dbReference type="InterPro" id="IPR036188">
    <property type="entry name" value="FAD/NAD-bd_sf"/>
</dbReference>
<dbReference type="InterPro" id="IPR000447">
    <property type="entry name" value="G3P_DH_FAD-dep"/>
</dbReference>
<dbReference type="PANTHER" id="PTHR11985:SF35">
    <property type="entry name" value="ANAEROBIC GLYCEROL-3-PHOSPHATE DEHYDROGENASE SUBUNIT A"/>
    <property type="match status" value="1"/>
</dbReference>
<dbReference type="PANTHER" id="PTHR11985">
    <property type="entry name" value="GLYCEROL-3-PHOSPHATE DEHYDROGENASE"/>
    <property type="match status" value="1"/>
</dbReference>
<dbReference type="Pfam" id="PF01266">
    <property type="entry name" value="DAO"/>
    <property type="match status" value="1"/>
</dbReference>
<dbReference type="Pfam" id="PF16901">
    <property type="entry name" value="DAO_C"/>
    <property type="match status" value="1"/>
</dbReference>
<dbReference type="PRINTS" id="PR01001">
    <property type="entry name" value="FADG3PDH"/>
</dbReference>
<dbReference type="SUPFAM" id="SSF54373">
    <property type="entry name" value="FAD-linked reductases, C-terminal domain"/>
    <property type="match status" value="1"/>
</dbReference>
<dbReference type="SUPFAM" id="SSF51905">
    <property type="entry name" value="FAD/NAD(P)-binding domain"/>
    <property type="match status" value="1"/>
</dbReference>
<dbReference type="PROSITE" id="PS00977">
    <property type="entry name" value="FAD_G3PDH_1"/>
    <property type="match status" value="1"/>
</dbReference>
<dbReference type="PROSITE" id="PS00978">
    <property type="entry name" value="FAD_G3PDH_2"/>
    <property type="match status" value="1"/>
</dbReference>
<sequence>MALSTFKREHIKKNLRNDEYDLVIIGGGITGAGIALDASERGMKVALVEMQDFAQGTSSRSTKLVHGGLRYLKQFQIGVVAETGKERAIVYENGPHVTTPEWMLLPMHKGGTFGKFSTSIGLGMYDRLAGVKKSERKKMLSKKETLAKEPLVKKEGLKGGGYYVEYRTDDARLTIEVMKRAAEKGAEIINYTKSEHFTYDKNQQVNGVKVIDKLTNENYTIKAKKVVNAAGPWVDDVRSGDYARNNKKLRLTKGVHVVIDQSKFPLGQAVYFDTEKDGRMIFAIPREGKAYVGTTDTFYDNIKSSPLTTQEDRDYLIDAINYMFPSVNVTDEDIESTWAGIRPLIYEEGKDPSEISRKDEIWEGKSGLLTIAGGKLTGYRHMAQDIVDLVSKRLKKDYGLTFSPCNTKGLAISGGDVGGSKNFDAFVEQKVDVAKGFGIDEDVARRLASKYGSNVDELFNIAQTSQYHDSKLPLEIYVELVYSIQQEMVYKPNDFLVRRSGKMYFNIKDVLDYKDAVIDIMADMLDYSPAQIEAYTEEVEQAIKEAQHGNNQPAVKE</sequence>
<feature type="chain" id="PRO_0000270059" description="Aerobic glycerol-3-phosphate dehydrogenase">
    <location>
        <begin position="1"/>
        <end position="557"/>
    </location>
</feature>
<feature type="binding site" evidence="2">
    <location>
        <begin position="21"/>
        <end position="49"/>
    </location>
    <ligand>
        <name>FAD</name>
        <dbReference type="ChEBI" id="CHEBI:57692"/>
    </ligand>
</feature>
<comment type="catalytic activity">
    <reaction>
        <text>a quinone + sn-glycerol 3-phosphate = dihydroxyacetone phosphate + a quinol</text>
        <dbReference type="Rhea" id="RHEA:18977"/>
        <dbReference type="ChEBI" id="CHEBI:24646"/>
        <dbReference type="ChEBI" id="CHEBI:57597"/>
        <dbReference type="ChEBI" id="CHEBI:57642"/>
        <dbReference type="ChEBI" id="CHEBI:132124"/>
        <dbReference type="EC" id="1.1.5.3"/>
    </reaction>
</comment>
<comment type="cofactor">
    <cofactor evidence="1">
        <name>FAD</name>
        <dbReference type="ChEBI" id="CHEBI:57692"/>
    </cofactor>
</comment>
<comment type="pathway">
    <text>Polyol metabolism; glycerol degradation via glycerol kinase pathway; glycerone phosphate from sn-glycerol 3-phosphate (aerobic route): step 1/1.</text>
</comment>
<comment type="subcellular location">
    <subcellularLocation>
        <location evidence="1">Cytoplasm</location>
    </subcellularLocation>
</comment>
<comment type="similarity">
    <text evidence="3">Belongs to the FAD-dependent glycerol-3-phosphate dehydrogenase family.</text>
</comment>
<proteinExistence type="inferred from homology"/>